<reference key="1">
    <citation type="journal article" date="2011" name="J. Bacteriol.">
        <title>Comparative genomics of 28 Salmonella enterica isolates: evidence for CRISPR-mediated adaptive sublineage evolution.</title>
        <authorList>
            <person name="Fricke W.F."/>
            <person name="Mammel M.K."/>
            <person name="McDermott P.F."/>
            <person name="Tartera C."/>
            <person name="White D.G."/>
            <person name="Leclerc J.E."/>
            <person name="Ravel J."/>
            <person name="Cebula T.A."/>
        </authorList>
    </citation>
    <scope>NUCLEOTIDE SEQUENCE [LARGE SCALE GENOMIC DNA]</scope>
    <source>
        <strain>SL476</strain>
    </source>
</reference>
<organism>
    <name type="scientific">Salmonella heidelberg (strain SL476)</name>
    <dbReference type="NCBI Taxonomy" id="454169"/>
    <lineage>
        <taxon>Bacteria</taxon>
        <taxon>Pseudomonadati</taxon>
        <taxon>Pseudomonadota</taxon>
        <taxon>Gammaproteobacteria</taxon>
        <taxon>Enterobacterales</taxon>
        <taxon>Enterobacteriaceae</taxon>
        <taxon>Salmonella</taxon>
    </lineage>
</organism>
<sequence>MIDKSAFIHPTAIVEDGAVIGANAHIGPFCIVGPQVEIGEGTVLKSHVVVNGQTKIGRDNEIYQFASIGEVNQDLKYAGEPTRVEIGDRNRIRESVTIHRGTVQGGGLTKVGSDNLLMINAHVAHDCTVGNRCILANNATLAGHVSVDDFAIIGGMTAVHQFCIIGAHVMVGGCSGVAQDVPPYVVAQGNHATPFGVNIEGLKRRGFSREGLVAIRNAYKLLYRSGKTLDEAKLEIAELAEKHPEVKAFTEFFERSTRGPIR</sequence>
<accession>B4TK56</accession>
<comment type="function">
    <text evidence="1">Involved in the biosynthesis of lipid A, a phosphorylated glycolipid that anchors the lipopolysaccharide to the outer membrane of the cell.</text>
</comment>
<comment type="catalytic activity">
    <reaction evidence="1">
        <text>a (3R)-hydroxyacyl-[ACP] + UDP-N-acetyl-alpha-D-glucosamine = a UDP-3-O-[(3R)-3-hydroxyacyl]-N-acetyl-alpha-D-glucosamine + holo-[ACP]</text>
        <dbReference type="Rhea" id="RHEA:67812"/>
        <dbReference type="Rhea" id="RHEA-COMP:9685"/>
        <dbReference type="Rhea" id="RHEA-COMP:9945"/>
        <dbReference type="ChEBI" id="CHEBI:57705"/>
        <dbReference type="ChEBI" id="CHEBI:64479"/>
        <dbReference type="ChEBI" id="CHEBI:78827"/>
        <dbReference type="ChEBI" id="CHEBI:173225"/>
        <dbReference type="EC" id="2.3.1.129"/>
    </reaction>
</comment>
<comment type="pathway">
    <text evidence="1">Glycolipid biosynthesis; lipid IV(A) biosynthesis; lipid IV(A) from (3R)-3-hydroxytetradecanoyl-[acyl-carrier-protein] and UDP-N-acetyl-alpha-D-glucosamine: step 1/6.</text>
</comment>
<comment type="subunit">
    <text evidence="1">Homotrimer.</text>
</comment>
<comment type="subcellular location">
    <subcellularLocation>
        <location evidence="1">Cytoplasm</location>
    </subcellularLocation>
</comment>
<comment type="similarity">
    <text evidence="1">Belongs to the transferase hexapeptide repeat family. LpxA subfamily.</text>
</comment>
<proteinExistence type="inferred from homology"/>
<protein>
    <recommendedName>
        <fullName evidence="1">Acyl-[acyl-carrier-protein]--UDP-N-acetylglucosamine O-acyltransferase</fullName>
        <shortName evidence="1">UDP-N-acetylglucosamine acyltransferase</shortName>
        <ecNumber evidence="1">2.3.1.129</ecNumber>
    </recommendedName>
</protein>
<evidence type="ECO:0000255" key="1">
    <source>
        <dbReference type="HAMAP-Rule" id="MF_00387"/>
    </source>
</evidence>
<feature type="chain" id="PRO_1000122729" description="Acyl-[acyl-carrier-protein]--UDP-N-acetylglucosamine O-acyltransferase">
    <location>
        <begin position="1"/>
        <end position="262"/>
    </location>
</feature>
<dbReference type="EC" id="2.3.1.129" evidence="1"/>
<dbReference type="EMBL" id="CP001120">
    <property type="protein sequence ID" value="ACF67940.1"/>
    <property type="molecule type" value="Genomic_DNA"/>
</dbReference>
<dbReference type="RefSeq" id="WP_000565951.1">
    <property type="nucleotide sequence ID" value="NC_011083.1"/>
</dbReference>
<dbReference type="SMR" id="B4TK56"/>
<dbReference type="KEGG" id="seh:SeHA_C0266"/>
<dbReference type="HOGENOM" id="CLU_061249_0_0_6"/>
<dbReference type="UniPathway" id="UPA00359">
    <property type="reaction ID" value="UER00477"/>
</dbReference>
<dbReference type="Proteomes" id="UP000001866">
    <property type="component" value="Chromosome"/>
</dbReference>
<dbReference type="GO" id="GO:0005737">
    <property type="term" value="C:cytoplasm"/>
    <property type="evidence" value="ECO:0007669"/>
    <property type="project" value="UniProtKB-SubCell"/>
</dbReference>
<dbReference type="GO" id="GO:0016020">
    <property type="term" value="C:membrane"/>
    <property type="evidence" value="ECO:0007669"/>
    <property type="project" value="GOC"/>
</dbReference>
<dbReference type="GO" id="GO:0008780">
    <property type="term" value="F:acyl-[acyl-carrier-protein]-UDP-N-acetylglucosamine O-acyltransferase activity"/>
    <property type="evidence" value="ECO:0007669"/>
    <property type="project" value="UniProtKB-UniRule"/>
</dbReference>
<dbReference type="GO" id="GO:0009245">
    <property type="term" value="P:lipid A biosynthetic process"/>
    <property type="evidence" value="ECO:0007669"/>
    <property type="project" value="UniProtKB-UniRule"/>
</dbReference>
<dbReference type="CDD" id="cd03351">
    <property type="entry name" value="LbH_UDP-GlcNAc_AT"/>
    <property type="match status" value="1"/>
</dbReference>
<dbReference type="FunFam" id="2.160.10.10:FF:000003">
    <property type="entry name" value="Acyl-[acyl-carrier-protein]--UDP-N-acetylglucosamine O-acyltransferase"/>
    <property type="match status" value="1"/>
</dbReference>
<dbReference type="Gene3D" id="2.160.10.10">
    <property type="entry name" value="Hexapeptide repeat proteins"/>
    <property type="match status" value="1"/>
</dbReference>
<dbReference type="Gene3D" id="1.20.1180.10">
    <property type="entry name" value="Udp N-acetylglucosamine O-acyltransferase, C-terminal domain"/>
    <property type="match status" value="1"/>
</dbReference>
<dbReference type="HAMAP" id="MF_00387">
    <property type="entry name" value="LpxA"/>
    <property type="match status" value="1"/>
</dbReference>
<dbReference type="InterPro" id="IPR029098">
    <property type="entry name" value="Acetyltransf_C"/>
</dbReference>
<dbReference type="InterPro" id="IPR037157">
    <property type="entry name" value="Acetyltransf_C_sf"/>
</dbReference>
<dbReference type="InterPro" id="IPR001451">
    <property type="entry name" value="Hexapep"/>
</dbReference>
<dbReference type="InterPro" id="IPR018357">
    <property type="entry name" value="Hexapep_transf_CS"/>
</dbReference>
<dbReference type="InterPro" id="IPR010137">
    <property type="entry name" value="Lipid_A_LpxA"/>
</dbReference>
<dbReference type="InterPro" id="IPR011004">
    <property type="entry name" value="Trimer_LpxA-like_sf"/>
</dbReference>
<dbReference type="NCBIfam" id="TIGR01852">
    <property type="entry name" value="lipid_A_lpxA"/>
    <property type="match status" value="1"/>
</dbReference>
<dbReference type="NCBIfam" id="NF003657">
    <property type="entry name" value="PRK05289.1"/>
    <property type="match status" value="1"/>
</dbReference>
<dbReference type="PANTHER" id="PTHR43480">
    <property type="entry name" value="ACYL-[ACYL-CARRIER-PROTEIN]--UDP-N-ACETYLGLUCOSAMINE O-ACYLTRANSFERASE"/>
    <property type="match status" value="1"/>
</dbReference>
<dbReference type="PANTHER" id="PTHR43480:SF1">
    <property type="entry name" value="ACYL-[ACYL-CARRIER-PROTEIN]--UDP-N-ACETYLGLUCOSAMINE O-ACYLTRANSFERASE, MITOCHONDRIAL-RELATED"/>
    <property type="match status" value="1"/>
</dbReference>
<dbReference type="Pfam" id="PF13720">
    <property type="entry name" value="Acetyltransf_11"/>
    <property type="match status" value="1"/>
</dbReference>
<dbReference type="Pfam" id="PF00132">
    <property type="entry name" value="Hexapep"/>
    <property type="match status" value="2"/>
</dbReference>
<dbReference type="PIRSF" id="PIRSF000456">
    <property type="entry name" value="UDP-GlcNAc_acltr"/>
    <property type="match status" value="1"/>
</dbReference>
<dbReference type="SUPFAM" id="SSF51161">
    <property type="entry name" value="Trimeric LpxA-like enzymes"/>
    <property type="match status" value="1"/>
</dbReference>
<dbReference type="PROSITE" id="PS00101">
    <property type="entry name" value="HEXAPEP_TRANSFERASES"/>
    <property type="match status" value="2"/>
</dbReference>
<name>LPXA_SALHS</name>
<keyword id="KW-0012">Acyltransferase</keyword>
<keyword id="KW-0963">Cytoplasm</keyword>
<keyword id="KW-0441">Lipid A biosynthesis</keyword>
<keyword id="KW-0444">Lipid biosynthesis</keyword>
<keyword id="KW-0443">Lipid metabolism</keyword>
<keyword id="KW-0677">Repeat</keyword>
<keyword id="KW-0808">Transferase</keyword>
<gene>
    <name evidence="1" type="primary">lpxA</name>
    <name type="ordered locus">SeHA_C0266</name>
</gene>